<keyword id="KW-0678">Repressor</keyword>
<keyword id="KW-0687">Ribonucleoprotein</keyword>
<keyword id="KW-0689">Ribosomal protein</keyword>
<keyword id="KW-0694">RNA-binding</keyword>
<keyword id="KW-0699">rRNA-binding</keyword>
<keyword id="KW-0810">Translation regulation</keyword>
<keyword id="KW-0820">tRNA-binding</keyword>
<accession>A6KYK6</accession>
<protein>
    <recommendedName>
        <fullName evidence="1">Large ribosomal subunit protein uL1</fullName>
    </recommendedName>
    <alternativeName>
        <fullName evidence="2">50S ribosomal protein L1</fullName>
    </alternativeName>
</protein>
<sequence length="232" mass="24934">MGKLTKNQKLAAEKIEAGKAYSLKEAAQLVKDITFSKFDASLDIDVRLGVDPRKANQMVRGVVSLPHGTGKQVRVLVLCTPDAEAAAKEAGADYVGLDEYIEKIKGGWTDIDVIITMPSIMGKIGALGRVLGPRGLMPNPKSGTVTMDVAKAVKEVKQGKIDFKVDKSGIVHTSIGKVSFTADQIRDNAKEFIATIIKLKPSSAKGTYIKSIYLSSTMSKGIKIDPKTVEEN</sequence>
<feature type="chain" id="PRO_0000307961" description="Large ribosomal subunit protein uL1">
    <location>
        <begin position="1"/>
        <end position="232"/>
    </location>
</feature>
<name>RL1_PHOV8</name>
<gene>
    <name evidence="1" type="primary">rplA</name>
    <name type="ordered locus">BVU_0816</name>
</gene>
<organism>
    <name type="scientific">Phocaeicola vulgatus (strain ATCC 8482 / DSM 1447 / JCM 5826 / CCUG 4940 / NBRC 14291 / NCTC 11154)</name>
    <name type="common">Bacteroides vulgatus</name>
    <dbReference type="NCBI Taxonomy" id="435590"/>
    <lineage>
        <taxon>Bacteria</taxon>
        <taxon>Pseudomonadati</taxon>
        <taxon>Bacteroidota</taxon>
        <taxon>Bacteroidia</taxon>
        <taxon>Bacteroidales</taxon>
        <taxon>Bacteroidaceae</taxon>
        <taxon>Phocaeicola</taxon>
    </lineage>
</organism>
<comment type="function">
    <text evidence="1">Binds directly to 23S rRNA. The L1 stalk is quite mobile in the ribosome, and is involved in E site tRNA release.</text>
</comment>
<comment type="function">
    <text evidence="1">Protein L1 is also a translational repressor protein, it controls the translation of the L11 operon by binding to its mRNA.</text>
</comment>
<comment type="subunit">
    <text evidence="1">Part of the 50S ribosomal subunit.</text>
</comment>
<comment type="similarity">
    <text evidence="1">Belongs to the universal ribosomal protein uL1 family.</text>
</comment>
<proteinExistence type="inferred from homology"/>
<dbReference type="EMBL" id="CP000139">
    <property type="protein sequence ID" value="ABR38520.1"/>
    <property type="molecule type" value="Genomic_DNA"/>
</dbReference>
<dbReference type="RefSeq" id="WP_005844828.1">
    <property type="nucleotide sequence ID" value="NZ_JANSWM010000035.1"/>
</dbReference>
<dbReference type="SMR" id="A6KYK6"/>
<dbReference type="STRING" id="435590.BVU_0816"/>
<dbReference type="PaxDb" id="435590-BVU_0816"/>
<dbReference type="GeneID" id="82155772"/>
<dbReference type="KEGG" id="bvu:BVU_0816"/>
<dbReference type="eggNOG" id="COG0081">
    <property type="taxonomic scope" value="Bacteria"/>
</dbReference>
<dbReference type="HOGENOM" id="CLU_062853_0_0_10"/>
<dbReference type="BioCyc" id="BVUL435590:G1G59-858-MONOMER"/>
<dbReference type="Proteomes" id="UP000002861">
    <property type="component" value="Chromosome"/>
</dbReference>
<dbReference type="GO" id="GO:0015934">
    <property type="term" value="C:large ribosomal subunit"/>
    <property type="evidence" value="ECO:0007669"/>
    <property type="project" value="InterPro"/>
</dbReference>
<dbReference type="GO" id="GO:0019843">
    <property type="term" value="F:rRNA binding"/>
    <property type="evidence" value="ECO:0007669"/>
    <property type="project" value="UniProtKB-UniRule"/>
</dbReference>
<dbReference type="GO" id="GO:0003735">
    <property type="term" value="F:structural constituent of ribosome"/>
    <property type="evidence" value="ECO:0007669"/>
    <property type="project" value="InterPro"/>
</dbReference>
<dbReference type="GO" id="GO:0000049">
    <property type="term" value="F:tRNA binding"/>
    <property type="evidence" value="ECO:0007669"/>
    <property type="project" value="UniProtKB-KW"/>
</dbReference>
<dbReference type="GO" id="GO:0006417">
    <property type="term" value="P:regulation of translation"/>
    <property type="evidence" value="ECO:0007669"/>
    <property type="project" value="UniProtKB-KW"/>
</dbReference>
<dbReference type="GO" id="GO:0006412">
    <property type="term" value="P:translation"/>
    <property type="evidence" value="ECO:0007669"/>
    <property type="project" value="UniProtKB-UniRule"/>
</dbReference>
<dbReference type="CDD" id="cd00403">
    <property type="entry name" value="Ribosomal_L1"/>
    <property type="match status" value="1"/>
</dbReference>
<dbReference type="FunFam" id="3.40.50.790:FF:000001">
    <property type="entry name" value="50S ribosomal protein L1"/>
    <property type="match status" value="1"/>
</dbReference>
<dbReference type="Gene3D" id="3.30.190.20">
    <property type="match status" value="1"/>
</dbReference>
<dbReference type="Gene3D" id="3.40.50.790">
    <property type="match status" value="1"/>
</dbReference>
<dbReference type="HAMAP" id="MF_01318_B">
    <property type="entry name" value="Ribosomal_uL1_B"/>
    <property type="match status" value="1"/>
</dbReference>
<dbReference type="InterPro" id="IPR005878">
    <property type="entry name" value="Ribosom_uL1_bac-type"/>
</dbReference>
<dbReference type="InterPro" id="IPR002143">
    <property type="entry name" value="Ribosomal_uL1"/>
</dbReference>
<dbReference type="InterPro" id="IPR023674">
    <property type="entry name" value="Ribosomal_uL1-like"/>
</dbReference>
<dbReference type="InterPro" id="IPR028364">
    <property type="entry name" value="Ribosomal_uL1/biogenesis"/>
</dbReference>
<dbReference type="InterPro" id="IPR016095">
    <property type="entry name" value="Ribosomal_uL1_3-a/b-sand"/>
</dbReference>
<dbReference type="InterPro" id="IPR023673">
    <property type="entry name" value="Ribosomal_uL1_CS"/>
</dbReference>
<dbReference type="NCBIfam" id="TIGR01169">
    <property type="entry name" value="rplA_bact"/>
    <property type="match status" value="1"/>
</dbReference>
<dbReference type="PANTHER" id="PTHR36427">
    <property type="entry name" value="54S RIBOSOMAL PROTEIN L1, MITOCHONDRIAL"/>
    <property type="match status" value="1"/>
</dbReference>
<dbReference type="PANTHER" id="PTHR36427:SF3">
    <property type="entry name" value="LARGE RIBOSOMAL SUBUNIT PROTEIN UL1M"/>
    <property type="match status" value="1"/>
</dbReference>
<dbReference type="Pfam" id="PF00687">
    <property type="entry name" value="Ribosomal_L1"/>
    <property type="match status" value="1"/>
</dbReference>
<dbReference type="PIRSF" id="PIRSF002155">
    <property type="entry name" value="Ribosomal_L1"/>
    <property type="match status" value="1"/>
</dbReference>
<dbReference type="SUPFAM" id="SSF56808">
    <property type="entry name" value="Ribosomal protein L1"/>
    <property type="match status" value="1"/>
</dbReference>
<dbReference type="PROSITE" id="PS01199">
    <property type="entry name" value="RIBOSOMAL_L1"/>
    <property type="match status" value="1"/>
</dbReference>
<evidence type="ECO:0000255" key="1">
    <source>
        <dbReference type="HAMAP-Rule" id="MF_01318"/>
    </source>
</evidence>
<evidence type="ECO:0000305" key="2"/>
<reference key="1">
    <citation type="journal article" date="2007" name="PLoS Biol.">
        <title>Evolution of symbiotic bacteria in the distal human intestine.</title>
        <authorList>
            <person name="Xu J."/>
            <person name="Mahowald M.A."/>
            <person name="Ley R.E."/>
            <person name="Lozupone C.A."/>
            <person name="Hamady M."/>
            <person name="Martens E.C."/>
            <person name="Henrissat B."/>
            <person name="Coutinho P.M."/>
            <person name="Minx P."/>
            <person name="Latreille P."/>
            <person name="Cordum H."/>
            <person name="Van Brunt A."/>
            <person name="Kim K."/>
            <person name="Fulton R.S."/>
            <person name="Fulton L.A."/>
            <person name="Clifton S.W."/>
            <person name="Wilson R.K."/>
            <person name="Knight R.D."/>
            <person name="Gordon J.I."/>
        </authorList>
    </citation>
    <scope>NUCLEOTIDE SEQUENCE [LARGE SCALE GENOMIC DNA]</scope>
    <source>
        <strain>ATCC 8482 / DSM 1447 / JCM 5826 / CCUG 4940 / NBRC 14291 / NCTC 11154</strain>
    </source>
</reference>